<name>HIS82_BACHK</name>
<protein>
    <recommendedName>
        <fullName evidence="1">Histidinol-phosphate aminotransferase 2</fullName>
        <ecNumber evidence="1">2.6.1.9</ecNumber>
    </recommendedName>
    <alternativeName>
        <fullName evidence="1">Imidazole acetol-phosphate transaminase 2</fullName>
    </alternativeName>
</protein>
<feature type="chain" id="PRO_0000153311" description="Histidinol-phosphate aminotransferase 2">
    <location>
        <begin position="1"/>
        <end position="366"/>
    </location>
</feature>
<feature type="region of interest" description="Disordered" evidence="2">
    <location>
        <begin position="1"/>
        <end position="21"/>
    </location>
</feature>
<feature type="compositionally biased region" description="Polar residues" evidence="2">
    <location>
        <begin position="1"/>
        <end position="11"/>
    </location>
</feature>
<feature type="modified residue" description="N6-(pyridoxal phosphate)lysine" evidence="1">
    <location>
        <position position="222"/>
    </location>
</feature>
<proteinExistence type="inferred from homology"/>
<sequence>MQVKDQLSSLQPYKPGKSPEQMKEVYGDHSFVKLASNENPFGCSPRVLDELQKSWLDHALYPDGGATTLRQTIANKLHVKMEQVLCGSGLDEVIQMISRAVLKAGDNIVTAEATFPQYRHHAIIEGCEVKEVALNNGVYDLDEISSVVDNNTKIVWICNPNNPTGTYVNDRKLTQFIEGISENTLIVIDEAYYEYVTAKDFPETLPLLEKHKNILVLRTFSKAYGLASFRIGYAIGQEELIEKLNVVRLPFNVSSLAQKAATIAFGDDEFIEEIVRVNTEGLRQYESFCKENEIPFYQSQTNFIFLPVENGGEIYEACAHAGFIIRPFPNGVRITVGTREQNEGVISVLQQHFENKKRKSRDEANA</sequence>
<evidence type="ECO:0000255" key="1">
    <source>
        <dbReference type="HAMAP-Rule" id="MF_01023"/>
    </source>
</evidence>
<evidence type="ECO:0000256" key="2">
    <source>
        <dbReference type="SAM" id="MobiDB-lite"/>
    </source>
</evidence>
<accession>Q6HHF6</accession>
<comment type="catalytic activity">
    <reaction evidence="1">
        <text>L-histidinol phosphate + 2-oxoglutarate = 3-(imidazol-4-yl)-2-oxopropyl phosphate + L-glutamate</text>
        <dbReference type="Rhea" id="RHEA:23744"/>
        <dbReference type="ChEBI" id="CHEBI:16810"/>
        <dbReference type="ChEBI" id="CHEBI:29985"/>
        <dbReference type="ChEBI" id="CHEBI:57766"/>
        <dbReference type="ChEBI" id="CHEBI:57980"/>
        <dbReference type="EC" id="2.6.1.9"/>
    </reaction>
</comment>
<comment type="cofactor">
    <cofactor evidence="1">
        <name>pyridoxal 5'-phosphate</name>
        <dbReference type="ChEBI" id="CHEBI:597326"/>
    </cofactor>
</comment>
<comment type="pathway">
    <text evidence="1">Amino-acid biosynthesis; L-histidine biosynthesis; L-histidine from 5-phospho-alpha-D-ribose 1-diphosphate: step 7/9.</text>
</comment>
<comment type="subunit">
    <text evidence="1">Homodimer.</text>
</comment>
<comment type="similarity">
    <text evidence="1">Belongs to the class-II pyridoxal-phosphate-dependent aminotransferase family. Histidinol-phosphate aminotransferase subfamily.</text>
</comment>
<gene>
    <name evidence="1" type="primary">hisC2</name>
    <name type="ordered locus">BT9727_2696</name>
</gene>
<keyword id="KW-0028">Amino-acid biosynthesis</keyword>
<keyword id="KW-0032">Aminotransferase</keyword>
<keyword id="KW-0368">Histidine biosynthesis</keyword>
<keyword id="KW-0663">Pyridoxal phosphate</keyword>
<keyword id="KW-0808">Transferase</keyword>
<dbReference type="EC" id="2.6.1.9" evidence="1"/>
<dbReference type="EMBL" id="AE017355">
    <property type="protein sequence ID" value="AAT61254.1"/>
    <property type="molecule type" value="Genomic_DNA"/>
</dbReference>
<dbReference type="RefSeq" id="YP_037020.1">
    <property type="nucleotide sequence ID" value="NC_005957.1"/>
</dbReference>
<dbReference type="SMR" id="Q6HHF6"/>
<dbReference type="KEGG" id="btk:BT9727_2696"/>
<dbReference type="PATRIC" id="fig|281309.8.peg.2862"/>
<dbReference type="HOGENOM" id="CLU_017584_3_3_9"/>
<dbReference type="UniPathway" id="UPA00031">
    <property type="reaction ID" value="UER00012"/>
</dbReference>
<dbReference type="Proteomes" id="UP000001301">
    <property type="component" value="Chromosome"/>
</dbReference>
<dbReference type="GO" id="GO:0004400">
    <property type="term" value="F:histidinol-phosphate transaminase activity"/>
    <property type="evidence" value="ECO:0007669"/>
    <property type="project" value="UniProtKB-UniRule"/>
</dbReference>
<dbReference type="GO" id="GO:0030170">
    <property type="term" value="F:pyridoxal phosphate binding"/>
    <property type="evidence" value="ECO:0007669"/>
    <property type="project" value="InterPro"/>
</dbReference>
<dbReference type="GO" id="GO:0000105">
    <property type="term" value="P:L-histidine biosynthetic process"/>
    <property type="evidence" value="ECO:0007669"/>
    <property type="project" value="UniProtKB-UniRule"/>
</dbReference>
<dbReference type="CDD" id="cd00609">
    <property type="entry name" value="AAT_like"/>
    <property type="match status" value="1"/>
</dbReference>
<dbReference type="Gene3D" id="3.90.1150.10">
    <property type="entry name" value="Aspartate Aminotransferase, domain 1"/>
    <property type="match status" value="1"/>
</dbReference>
<dbReference type="Gene3D" id="3.40.640.10">
    <property type="entry name" value="Type I PLP-dependent aspartate aminotransferase-like (Major domain)"/>
    <property type="match status" value="1"/>
</dbReference>
<dbReference type="HAMAP" id="MF_01023">
    <property type="entry name" value="HisC_aminotrans_2"/>
    <property type="match status" value="1"/>
</dbReference>
<dbReference type="InterPro" id="IPR001917">
    <property type="entry name" value="Aminotrans_II_pyridoxalP_BS"/>
</dbReference>
<dbReference type="InterPro" id="IPR004839">
    <property type="entry name" value="Aminotransferase_I/II_large"/>
</dbReference>
<dbReference type="InterPro" id="IPR005861">
    <property type="entry name" value="HisP_aminotrans"/>
</dbReference>
<dbReference type="InterPro" id="IPR050106">
    <property type="entry name" value="HistidinolP_aminotransfase"/>
</dbReference>
<dbReference type="InterPro" id="IPR015424">
    <property type="entry name" value="PyrdxlP-dep_Trfase"/>
</dbReference>
<dbReference type="InterPro" id="IPR015421">
    <property type="entry name" value="PyrdxlP-dep_Trfase_major"/>
</dbReference>
<dbReference type="InterPro" id="IPR015422">
    <property type="entry name" value="PyrdxlP-dep_Trfase_small"/>
</dbReference>
<dbReference type="NCBIfam" id="TIGR01141">
    <property type="entry name" value="hisC"/>
    <property type="match status" value="1"/>
</dbReference>
<dbReference type="PANTHER" id="PTHR43643:SF3">
    <property type="entry name" value="HISTIDINOL-PHOSPHATE AMINOTRANSFERASE"/>
    <property type="match status" value="1"/>
</dbReference>
<dbReference type="PANTHER" id="PTHR43643">
    <property type="entry name" value="HISTIDINOL-PHOSPHATE AMINOTRANSFERASE 2"/>
    <property type="match status" value="1"/>
</dbReference>
<dbReference type="Pfam" id="PF00155">
    <property type="entry name" value="Aminotran_1_2"/>
    <property type="match status" value="1"/>
</dbReference>
<dbReference type="SUPFAM" id="SSF53383">
    <property type="entry name" value="PLP-dependent transferases"/>
    <property type="match status" value="1"/>
</dbReference>
<dbReference type="PROSITE" id="PS00599">
    <property type="entry name" value="AA_TRANSFER_CLASS_2"/>
    <property type="match status" value="1"/>
</dbReference>
<reference key="1">
    <citation type="journal article" date="2006" name="J. Bacteriol.">
        <title>Pathogenomic sequence analysis of Bacillus cereus and Bacillus thuringiensis isolates closely related to Bacillus anthracis.</title>
        <authorList>
            <person name="Han C.S."/>
            <person name="Xie G."/>
            <person name="Challacombe J.F."/>
            <person name="Altherr M.R."/>
            <person name="Bhotika S.S."/>
            <person name="Bruce D."/>
            <person name="Campbell C.S."/>
            <person name="Campbell M.L."/>
            <person name="Chen J."/>
            <person name="Chertkov O."/>
            <person name="Cleland C."/>
            <person name="Dimitrijevic M."/>
            <person name="Doggett N.A."/>
            <person name="Fawcett J.J."/>
            <person name="Glavina T."/>
            <person name="Goodwin L.A."/>
            <person name="Hill K.K."/>
            <person name="Hitchcock P."/>
            <person name="Jackson P.J."/>
            <person name="Keim P."/>
            <person name="Kewalramani A.R."/>
            <person name="Longmire J."/>
            <person name="Lucas S."/>
            <person name="Malfatti S."/>
            <person name="McMurry K."/>
            <person name="Meincke L.J."/>
            <person name="Misra M."/>
            <person name="Moseman B.L."/>
            <person name="Mundt M."/>
            <person name="Munk A.C."/>
            <person name="Okinaka R.T."/>
            <person name="Parson-Quintana B."/>
            <person name="Reilly L.P."/>
            <person name="Richardson P."/>
            <person name="Robinson D.L."/>
            <person name="Rubin E."/>
            <person name="Saunders E."/>
            <person name="Tapia R."/>
            <person name="Tesmer J.G."/>
            <person name="Thayer N."/>
            <person name="Thompson L.S."/>
            <person name="Tice H."/>
            <person name="Ticknor L.O."/>
            <person name="Wills P.L."/>
            <person name="Brettin T.S."/>
            <person name="Gilna P."/>
        </authorList>
    </citation>
    <scope>NUCLEOTIDE SEQUENCE [LARGE SCALE GENOMIC DNA]</scope>
    <source>
        <strain>97-27</strain>
    </source>
</reference>
<organism>
    <name type="scientific">Bacillus thuringiensis subsp. konkukian (strain 97-27)</name>
    <dbReference type="NCBI Taxonomy" id="281309"/>
    <lineage>
        <taxon>Bacteria</taxon>
        <taxon>Bacillati</taxon>
        <taxon>Bacillota</taxon>
        <taxon>Bacilli</taxon>
        <taxon>Bacillales</taxon>
        <taxon>Bacillaceae</taxon>
        <taxon>Bacillus</taxon>
        <taxon>Bacillus cereus group</taxon>
    </lineage>
</organism>